<gene>
    <name evidence="1" type="primary">ubiE</name>
    <name type="ordered locus">EcSMS35_4216</name>
</gene>
<reference key="1">
    <citation type="journal article" date="2008" name="J. Bacteriol.">
        <title>Insights into the environmental resistance gene pool from the genome sequence of the multidrug-resistant environmental isolate Escherichia coli SMS-3-5.</title>
        <authorList>
            <person name="Fricke W.F."/>
            <person name="Wright M.S."/>
            <person name="Lindell A.H."/>
            <person name="Harkins D.M."/>
            <person name="Baker-Austin C."/>
            <person name="Ravel J."/>
            <person name="Stepanauskas R."/>
        </authorList>
    </citation>
    <scope>NUCLEOTIDE SEQUENCE [LARGE SCALE GENOMIC DNA]</scope>
    <source>
        <strain>SMS-3-5 / SECEC</strain>
    </source>
</reference>
<accession>B1LM21</accession>
<comment type="function">
    <text evidence="1">Methyltransferase required for the conversion of demethylmenaquinol (DMKH2) to menaquinol (MKH2) and the conversion of 2-polyprenyl-6-methoxy-1,4-benzoquinol (DDMQH2) to 2-polyprenyl-3-methyl-6-methoxy-1,4-benzoquinol (DMQH2).</text>
</comment>
<comment type="catalytic activity">
    <reaction evidence="1">
        <text>a 2-demethylmenaquinol + S-adenosyl-L-methionine = a menaquinol + S-adenosyl-L-homocysteine + H(+)</text>
        <dbReference type="Rhea" id="RHEA:42640"/>
        <dbReference type="Rhea" id="RHEA-COMP:9539"/>
        <dbReference type="Rhea" id="RHEA-COMP:9563"/>
        <dbReference type="ChEBI" id="CHEBI:15378"/>
        <dbReference type="ChEBI" id="CHEBI:18151"/>
        <dbReference type="ChEBI" id="CHEBI:55437"/>
        <dbReference type="ChEBI" id="CHEBI:57856"/>
        <dbReference type="ChEBI" id="CHEBI:59789"/>
        <dbReference type="EC" id="2.1.1.163"/>
    </reaction>
</comment>
<comment type="catalytic activity">
    <reaction evidence="1">
        <text>a 2-methoxy-6-(all-trans-polyprenyl)benzene-1,4-diol + S-adenosyl-L-methionine = a 5-methoxy-2-methyl-3-(all-trans-polyprenyl)benzene-1,4-diol + S-adenosyl-L-homocysteine + H(+)</text>
        <dbReference type="Rhea" id="RHEA:28286"/>
        <dbReference type="Rhea" id="RHEA-COMP:10858"/>
        <dbReference type="Rhea" id="RHEA-COMP:10859"/>
        <dbReference type="ChEBI" id="CHEBI:15378"/>
        <dbReference type="ChEBI" id="CHEBI:57856"/>
        <dbReference type="ChEBI" id="CHEBI:59789"/>
        <dbReference type="ChEBI" id="CHEBI:84166"/>
        <dbReference type="ChEBI" id="CHEBI:84167"/>
        <dbReference type="EC" id="2.1.1.201"/>
    </reaction>
</comment>
<comment type="pathway">
    <text evidence="1">Quinol/quinone metabolism; menaquinone biosynthesis; menaquinol from 1,4-dihydroxy-2-naphthoate: step 2/2.</text>
</comment>
<comment type="pathway">
    <text evidence="1">Cofactor biosynthesis; ubiquinone biosynthesis.</text>
</comment>
<comment type="similarity">
    <text evidence="1">Belongs to the class I-like SAM-binding methyltransferase superfamily. MenG/UbiE family.</text>
</comment>
<keyword id="KW-0474">Menaquinone biosynthesis</keyword>
<keyword id="KW-0489">Methyltransferase</keyword>
<keyword id="KW-0949">S-adenosyl-L-methionine</keyword>
<keyword id="KW-0808">Transferase</keyword>
<keyword id="KW-0831">Ubiquinone biosynthesis</keyword>
<dbReference type="EC" id="2.1.1.163" evidence="1"/>
<dbReference type="EC" id="2.1.1.201" evidence="1"/>
<dbReference type="EMBL" id="CP000970">
    <property type="protein sequence ID" value="ACB17979.1"/>
    <property type="molecule type" value="Genomic_DNA"/>
</dbReference>
<dbReference type="RefSeq" id="WP_000227958.1">
    <property type="nucleotide sequence ID" value="NC_010498.1"/>
</dbReference>
<dbReference type="SMR" id="B1LM21"/>
<dbReference type="GeneID" id="93778102"/>
<dbReference type="KEGG" id="ecm:EcSMS35_4216"/>
<dbReference type="HOGENOM" id="CLU_037990_0_0_6"/>
<dbReference type="UniPathway" id="UPA00079">
    <property type="reaction ID" value="UER00169"/>
</dbReference>
<dbReference type="UniPathway" id="UPA00232"/>
<dbReference type="Proteomes" id="UP000007011">
    <property type="component" value="Chromosome"/>
</dbReference>
<dbReference type="GO" id="GO:0008425">
    <property type="term" value="F:2-methoxy-6-polyprenyl-1,4-benzoquinol methyltransferase activity"/>
    <property type="evidence" value="ECO:0007669"/>
    <property type="project" value="UniProtKB-UniRule"/>
</dbReference>
<dbReference type="GO" id="GO:0043770">
    <property type="term" value="F:demethylmenaquinone methyltransferase activity"/>
    <property type="evidence" value="ECO:0007669"/>
    <property type="project" value="UniProtKB-UniRule"/>
</dbReference>
<dbReference type="GO" id="GO:0009060">
    <property type="term" value="P:aerobic respiration"/>
    <property type="evidence" value="ECO:0007669"/>
    <property type="project" value="UniProtKB-UniRule"/>
</dbReference>
<dbReference type="GO" id="GO:0009234">
    <property type="term" value="P:menaquinone biosynthetic process"/>
    <property type="evidence" value="ECO:0007669"/>
    <property type="project" value="UniProtKB-UniRule"/>
</dbReference>
<dbReference type="GO" id="GO:0032259">
    <property type="term" value="P:methylation"/>
    <property type="evidence" value="ECO:0007669"/>
    <property type="project" value="UniProtKB-KW"/>
</dbReference>
<dbReference type="CDD" id="cd02440">
    <property type="entry name" value="AdoMet_MTases"/>
    <property type="match status" value="1"/>
</dbReference>
<dbReference type="FunFam" id="3.40.50.150:FF:000014">
    <property type="entry name" value="Ubiquinone/menaquinone biosynthesis C-methyltransferase UbiE"/>
    <property type="match status" value="1"/>
</dbReference>
<dbReference type="Gene3D" id="3.40.50.150">
    <property type="entry name" value="Vaccinia Virus protein VP39"/>
    <property type="match status" value="1"/>
</dbReference>
<dbReference type="HAMAP" id="MF_01813">
    <property type="entry name" value="MenG_UbiE_methyltr"/>
    <property type="match status" value="1"/>
</dbReference>
<dbReference type="InterPro" id="IPR029063">
    <property type="entry name" value="SAM-dependent_MTases_sf"/>
</dbReference>
<dbReference type="InterPro" id="IPR004033">
    <property type="entry name" value="UbiE/COQ5_MeTrFase"/>
</dbReference>
<dbReference type="InterPro" id="IPR023576">
    <property type="entry name" value="UbiE/COQ5_MeTrFase_CS"/>
</dbReference>
<dbReference type="NCBIfam" id="TIGR01934">
    <property type="entry name" value="MenG_MenH_UbiE"/>
    <property type="match status" value="1"/>
</dbReference>
<dbReference type="NCBIfam" id="NF001240">
    <property type="entry name" value="PRK00216.1-1"/>
    <property type="match status" value="1"/>
</dbReference>
<dbReference type="NCBIfam" id="NF001242">
    <property type="entry name" value="PRK00216.1-3"/>
    <property type="match status" value="1"/>
</dbReference>
<dbReference type="NCBIfam" id="NF001244">
    <property type="entry name" value="PRK00216.1-5"/>
    <property type="match status" value="1"/>
</dbReference>
<dbReference type="PANTHER" id="PTHR43591:SF24">
    <property type="entry name" value="2-METHOXY-6-POLYPRENYL-1,4-BENZOQUINOL METHYLASE, MITOCHONDRIAL"/>
    <property type="match status" value="1"/>
</dbReference>
<dbReference type="PANTHER" id="PTHR43591">
    <property type="entry name" value="METHYLTRANSFERASE"/>
    <property type="match status" value="1"/>
</dbReference>
<dbReference type="Pfam" id="PF01209">
    <property type="entry name" value="Ubie_methyltran"/>
    <property type="match status" value="1"/>
</dbReference>
<dbReference type="SUPFAM" id="SSF53335">
    <property type="entry name" value="S-adenosyl-L-methionine-dependent methyltransferases"/>
    <property type="match status" value="1"/>
</dbReference>
<dbReference type="PROSITE" id="PS51608">
    <property type="entry name" value="SAM_MT_UBIE"/>
    <property type="match status" value="1"/>
</dbReference>
<dbReference type="PROSITE" id="PS01183">
    <property type="entry name" value="UBIE_1"/>
    <property type="match status" value="1"/>
</dbReference>
<dbReference type="PROSITE" id="PS01184">
    <property type="entry name" value="UBIE_2"/>
    <property type="match status" value="1"/>
</dbReference>
<proteinExistence type="inferred from homology"/>
<protein>
    <recommendedName>
        <fullName evidence="1">Ubiquinone/menaquinone biosynthesis C-methyltransferase UbiE</fullName>
        <ecNumber evidence="1">2.1.1.163</ecNumber>
        <ecNumber evidence="1">2.1.1.201</ecNumber>
    </recommendedName>
    <alternativeName>
        <fullName evidence="1">2-methoxy-6-polyprenyl-1,4-benzoquinol methylase</fullName>
    </alternativeName>
    <alternativeName>
        <fullName evidence="1">Demethylmenaquinone methyltransferase</fullName>
    </alternativeName>
</protein>
<evidence type="ECO:0000255" key="1">
    <source>
        <dbReference type="HAMAP-Rule" id="MF_01813"/>
    </source>
</evidence>
<sequence>MVDKSQETTHFGFQTVAKEQKADMVAHVFHSVASKYDVMNDLMSFGIHRLWKRFTIDCSGVRRGQTVLDLAGGTGDLTAKFSRLVGETGKVVLADINESMLKMGREKLRNIGVIGNVEYVQANAEALPFPDNTFDCITISFGLRNVTDKDKALRSMYRVLKPGGRLLVLEFSKPIIEPLSKAYDAYSFHVLPRIGSLVANDADSYRYLAESIRMHPDQDTLKAMMQDAGFESVDYYNLTAGVVALHRGYKF</sequence>
<name>UBIE_ECOSM</name>
<feature type="chain" id="PRO_1000187764" description="Ubiquinone/menaquinone biosynthesis C-methyltransferase UbiE">
    <location>
        <begin position="1"/>
        <end position="251"/>
    </location>
</feature>
<feature type="binding site" evidence="1">
    <location>
        <position position="74"/>
    </location>
    <ligand>
        <name>S-adenosyl-L-methionine</name>
        <dbReference type="ChEBI" id="CHEBI:59789"/>
    </ligand>
</feature>
<feature type="binding site" evidence="1">
    <location>
        <position position="95"/>
    </location>
    <ligand>
        <name>S-adenosyl-L-methionine</name>
        <dbReference type="ChEBI" id="CHEBI:59789"/>
    </ligand>
</feature>
<feature type="binding site" evidence="1">
    <location>
        <begin position="123"/>
        <end position="124"/>
    </location>
    <ligand>
        <name>S-adenosyl-L-methionine</name>
        <dbReference type="ChEBI" id="CHEBI:59789"/>
    </ligand>
</feature>
<feature type="binding site" evidence="1">
    <location>
        <position position="140"/>
    </location>
    <ligand>
        <name>S-adenosyl-L-methionine</name>
        <dbReference type="ChEBI" id="CHEBI:59789"/>
    </ligand>
</feature>
<organism>
    <name type="scientific">Escherichia coli (strain SMS-3-5 / SECEC)</name>
    <dbReference type="NCBI Taxonomy" id="439855"/>
    <lineage>
        <taxon>Bacteria</taxon>
        <taxon>Pseudomonadati</taxon>
        <taxon>Pseudomonadota</taxon>
        <taxon>Gammaproteobacteria</taxon>
        <taxon>Enterobacterales</taxon>
        <taxon>Enterobacteriaceae</taxon>
        <taxon>Escherichia</taxon>
    </lineage>
</organism>